<comment type="function">
    <text evidence="1">Forms part of the ribosomal stalk, playing a central role in the interaction of the ribosome with GTP-bound translation factors.</text>
</comment>
<comment type="subunit">
    <text evidence="1">Part of the 50S ribosomal subunit. Forms part of the ribosomal stalk which helps the ribosome interact with GTP-bound translation factors. Forms a heptameric L10(L12)2(L12)2(L12)2 complex, where L10 forms an elongated spine to which the L12 dimers bind in a sequential fashion.</text>
</comment>
<comment type="similarity">
    <text evidence="1">Belongs to the universal ribosomal protein uL10 family.</text>
</comment>
<organism>
    <name type="scientific">Methanosarcina mazei (strain ATCC BAA-159 / DSM 3647 / Goe1 / Go1 / JCM 11833 / OCM 88)</name>
    <name type="common">Methanosarcina frisia</name>
    <dbReference type="NCBI Taxonomy" id="192952"/>
    <lineage>
        <taxon>Archaea</taxon>
        <taxon>Methanobacteriati</taxon>
        <taxon>Methanobacteriota</taxon>
        <taxon>Stenosarchaea group</taxon>
        <taxon>Methanomicrobia</taxon>
        <taxon>Methanosarcinales</taxon>
        <taxon>Methanosarcinaceae</taxon>
        <taxon>Methanosarcina</taxon>
    </lineage>
</organism>
<accession>Q8PY51</accession>
<proteinExistence type="inferred from homology"/>
<gene>
    <name evidence="1" type="primary">rpl10</name>
    <name evidence="1" type="synonym">rplP0</name>
    <name type="ordered locus">MM_1013</name>
</gene>
<reference key="1">
    <citation type="journal article" date="2002" name="J. Mol. Microbiol. Biotechnol.">
        <title>The genome of Methanosarcina mazei: evidence for lateral gene transfer between Bacteria and Archaea.</title>
        <authorList>
            <person name="Deppenmeier U."/>
            <person name="Johann A."/>
            <person name="Hartsch T."/>
            <person name="Merkl R."/>
            <person name="Schmitz R.A."/>
            <person name="Martinez-Arias R."/>
            <person name="Henne A."/>
            <person name="Wiezer A."/>
            <person name="Baeumer S."/>
            <person name="Jacobi C."/>
            <person name="Brueggemann H."/>
            <person name="Lienard T."/>
            <person name="Christmann A."/>
            <person name="Boemecke M."/>
            <person name="Steckel S."/>
            <person name="Bhattacharyya A."/>
            <person name="Lykidis A."/>
            <person name="Overbeek R."/>
            <person name="Klenk H.-P."/>
            <person name="Gunsalus R.P."/>
            <person name="Fritz H.-J."/>
            <person name="Gottschalk G."/>
        </authorList>
    </citation>
    <scope>NUCLEOTIDE SEQUENCE [LARGE SCALE GENOMIC DNA]</scope>
    <source>
        <strain>ATCC BAA-159 / DSM 3647 / Goe1 / Go1 / JCM 11833 / OCM 88</strain>
    </source>
</reference>
<sequence>MAEERHHTEHIPQWKKDEIENIKELIQSHKVFGMVRIEGILATKIQKIRRDLKDVAVLKVSRNTLTERALNQLGESIPEMTRYLDNQTALIFTNESPFKLYKLLEQTKTPSPIKAGAIAPEDIIVQKGPTSFPPGPILGELQSAGIPASIDAGKVAVKETKVVCKAGEAVPQKLATMLSKLEIYPLIVGLDLRAAYDDGTIYEPELLAVDESKYFSDIIRAAQNAFNLSVNTAYPTGATIGTLLAKAYAESKSLGVNAVILEPGVMDSLLAKAHVQMTSVASEAAEKDANAVDDDLREVLGAAASAAAAATVAAPAAEEEKKEEEPEEEEEDHAEEDGMAGLGALFG</sequence>
<name>RL10_METMA</name>
<evidence type="ECO:0000255" key="1">
    <source>
        <dbReference type="HAMAP-Rule" id="MF_00280"/>
    </source>
</evidence>
<evidence type="ECO:0000256" key="2">
    <source>
        <dbReference type="SAM" id="MobiDB-lite"/>
    </source>
</evidence>
<evidence type="ECO:0000305" key="3"/>
<keyword id="KW-0687">Ribonucleoprotein</keyword>
<keyword id="KW-0689">Ribosomal protein</keyword>
<keyword id="KW-0694">RNA-binding</keyword>
<keyword id="KW-0699">rRNA-binding</keyword>
<dbReference type="EMBL" id="AE008384">
    <property type="protein sequence ID" value="AAM30709.1"/>
    <property type="molecule type" value="Genomic_DNA"/>
</dbReference>
<dbReference type="RefSeq" id="WP_011032962.1">
    <property type="nucleotide sequence ID" value="NC_003901.1"/>
</dbReference>
<dbReference type="SMR" id="Q8PY51"/>
<dbReference type="KEGG" id="mma:MM_1013"/>
<dbReference type="PATRIC" id="fig|192952.21.peg.1187"/>
<dbReference type="eggNOG" id="arCOG04288">
    <property type="taxonomic scope" value="Archaea"/>
</dbReference>
<dbReference type="HOGENOM" id="CLU_053173_0_0_2"/>
<dbReference type="Proteomes" id="UP000000595">
    <property type="component" value="Chromosome"/>
</dbReference>
<dbReference type="GO" id="GO:0022625">
    <property type="term" value="C:cytosolic large ribosomal subunit"/>
    <property type="evidence" value="ECO:0007669"/>
    <property type="project" value="TreeGrafter"/>
</dbReference>
<dbReference type="GO" id="GO:0070180">
    <property type="term" value="F:large ribosomal subunit rRNA binding"/>
    <property type="evidence" value="ECO:0007669"/>
    <property type="project" value="UniProtKB-UniRule"/>
</dbReference>
<dbReference type="GO" id="GO:0003735">
    <property type="term" value="F:structural constituent of ribosome"/>
    <property type="evidence" value="ECO:0007669"/>
    <property type="project" value="TreeGrafter"/>
</dbReference>
<dbReference type="GO" id="GO:0002181">
    <property type="term" value="P:cytoplasmic translation"/>
    <property type="evidence" value="ECO:0007669"/>
    <property type="project" value="TreeGrafter"/>
</dbReference>
<dbReference type="GO" id="GO:0000027">
    <property type="term" value="P:ribosomal large subunit assembly"/>
    <property type="evidence" value="ECO:0007669"/>
    <property type="project" value="TreeGrafter"/>
</dbReference>
<dbReference type="CDD" id="cd05795">
    <property type="entry name" value="Ribosomal_P0_L10e"/>
    <property type="match status" value="1"/>
</dbReference>
<dbReference type="Gene3D" id="3.30.70.1730">
    <property type="match status" value="1"/>
</dbReference>
<dbReference type="Gene3D" id="3.90.105.20">
    <property type="match status" value="1"/>
</dbReference>
<dbReference type="Gene3D" id="6.10.140.760">
    <property type="match status" value="1"/>
</dbReference>
<dbReference type="HAMAP" id="MF_00280">
    <property type="entry name" value="Ribosomal_uL10_arch"/>
    <property type="match status" value="1"/>
</dbReference>
<dbReference type="InterPro" id="IPR050323">
    <property type="entry name" value="Ribosomal_protein_uL10"/>
</dbReference>
<dbReference type="InterPro" id="IPR001790">
    <property type="entry name" value="Ribosomal_uL10"/>
</dbReference>
<dbReference type="InterPro" id="IPR040637">
    <property type="entry name" value="Ribosomal_uL10-like_insert"/>
</dbReference>
<dbReference type="InterPro" id="IPR043164">
    <property type="entry name" value="Ribosomal_uL10-like_insert_sf"/>
</dbReference>
<dbReference type="InterPro" id="IPR043141">
    <property type="entry name" value="Ribosomal_uL10-like_sf"/>
</dbReference>
<dbReference type="InterPro" id="IPR022909">
    <property type="entry name" value="Ribosomal_uL10_arc"/>
</dbReference>
<dbReference type="NCBIfam" id="NF003098">
    <property type="entry name" value="PRK04019.1-5"/>
    <property type="match status" value="1"/>
</dbReference>
<dbReference type="PANTHER" id="PTHR45699">
    <property type="entry name" value="60S ACIDIC RIBOSOMAL PROTEIN P0"/>
    <property type="match status" value="1"/>
</dbReference>
<dbReference type="PANTHER" id="PTHR45699:SF3">
    <property type="entry name" value="LARGE RIBOSOMAL SUBUNIT PROTEIN UL10"/>
    <property type="match status" value="1"/>
</dbReference>
<dbReference type="Pfam" id="PF00466">
    <property type="entry name" value="Ribosomal_L10"/>
    <property type="match status" value="1"/>
</dbReference>
<dbReference type="Pfam" id="PF17777">
    <property type="entry name" value="RL10P_insert"/>
    <property type="match status" value="1"/>
</dbReference>
<dbReference type="SUPFAM" id="SSF160369">
    <property type="entry name" value="Ribosomal protein L10-like"/>
    <property type="match status" value="1"/>
</dbReference>
<protein>
    <recommendedName>
        <fullName evidence="1">Large ribosomal subunit protein uL10</fullName>
    </recommendedName>
    <alternativeName>
        <fullName evidence="3">50S ribosomal protein L10</fullName>
    </alternativeName>
    <alternativeName>
        <fullName evidence="1">Acidic ribosomal protein P0 homolog</fullName>
    </alternativeName>
</protein>
<feature type="chain" id="PRO_0000154795" description="Large ribosomal subunit protein uL10">
    <location>
        <begin position="1"/>
        <end position="347"/>
    </location>
</feature>
<feature type="region of interest" description="Disordered" evidence="2">
    <location>
        <begin position="310"/>
        <end position="347"/>
    </location>
</feature>
<feature type="compositionally biased region" description="Acidic residues" evidence="2">
    <location>
        <begin position="325"/>
        <end position="338"/>
    </location>
</feature>